<reference key="1">
    <citation type="journal article" date="2002" name="Proc. Natl. Acad. Sci. U.S.A.">
        <title>The complete genome sequence of Chlorobium tepidum TLS, a photosynthetic, anaerobic, green-sulfur bacterium.</title>
        <authorList>
            <person name="Eisen J.A."/>
            <person name="Nelson K.E."/>
            <person name="Paulsen I.T."/>
            <person name="Heidelberg J.F."/>
            <person name="Wu M."/>
            <person name="Dodson R.J."/>
            <person name="DeBoy R.T."/>
            <person name="Gwinn M.L."/>
            <person name="Nelson W.C."/>
            <person name="Haft D.H."/>
            <person name="Hickey E.K."/>
            <person name="Peterson J.D."/>
            <person name="Durkin A.S."/>
            <person name="Kolonay J.F."/>
            <person name="Yang F."/>
            <person name="Holt I.E."/>
            <person name="Umayam L.A."/>
            <person name="Mason T.M."/>
            <person name="Brenner M."/>
            <person name="Shea T.P."/>
            <person name="Parksey D.S."/>
            <person name="Nierman W.C."/>
            <person name="Feldblyum T.V."/>
            <person name="Hansen C.L."/>
            <person name="Craven M.B."/>
            <person name="Radune D."/>
            <person name="Vamathevan J.J."/>
            <person name="Khouri H.M."/>
            <person name="White O."/>
            <person name="Gruber T.M."/>
            <person name="Ketchum K.A."/>
            <person name="Venter J.C."/>
            <person name="Tettelin H."/>
            <person name="Bryant D.A."/>
            <person name="Fraser C.M."/>
        </authorList>
    </citation>
    <scope>NUCLEOTIDE SEQUENCE [LARGE SCALE GENOMIC DNA]</scope>
    <source>
        <strain>ATCC 49652 / DSM 12025 / NBRC 103806 / TLS</strain>
    </source>
</reference>
<proteinExistence type="inferred from homology"/>
<organism>
    <name type="scientific">Chlorobaculum tepidum (strain ATCC 49652 / DSM 12025 / NBRC 103806 / TLS)</name>
    <name type="common">Chlorobium tepidum</name>
    <dbReference type="NCBI Taxonomy" id="194439"/>
    <lineage>
        <taxon>Bacteria</taxon>
        <taxon>Pseudomonadati</taxon>
        <taxon>Chlorobiota</taxon>
        <taxon>Chlorobiia</taxon>
        <taxon>Chlorobiales</taxon>
        <taxon>Chlorobiaceae</taxon>
        <taxon>Chlorobaculum</taxon>
    </lineage>
</organism>
<evidence type="ECO:0000255" key="1">
    <source>
        <dbReference type="HAMAP-Rule" id="MF_00028"/>
    </source>
</evidence>
<sequence length="500" mass="53715">MTNIAILGTASDVGKSIVATALCRIFSNAGVDVAPYKAQNMSNNSGVTPDGFEMGRAQIVQAQAARVAPHADMNPVLLKPNTDTGAQVVLQGKVCADKSAREYFGDTQRWAEAAFESLDRLMVRHELLVIEGAGSCAEMNLYQRDFVNFKTARRAGAAVILVADIDRGGVFAQVVGTLAVIPPEDRALVKGVIINRFRGDKSLFEGGVKMLESMTGVPVLGVIPYFRGFTIDAEDAVPLSSVVDPKQEPSGDKIGVAAIYFPHISNFTDLAPLERDPSVELHYLHRPKSLDGYKALILPGSKNVRGDLAWLETMGWRDEIEKFRKRGGIIVGLCGGYQMLGASIADPYGVEGAPGASAGLAMLPVETVLEREKALCNSVGKIAGTPFFVSGYEIHMGRTALEPGASPLLEVTERNGVATDDFDGAKSADGQVTGTYFHGFFDRPEVRTWFLRLLDGGYESPRGASVADPFELLAKHFSENLDLEKLFAIAGLSVKGEKES</sequence>
<name>COBQ_CHLTE</name>
<accession>Q8KDV6</accession>
<feature type="chain" id="PRO_0000141294" description="Cobyric acid synthase">
    <location>
        <begin position="1"/>
        <end position="500"/>
    </location>
</feature>
<feature type="domain" description="GATase cobBQ-type" evidence="1">
    <location>
        <begin position="253"/>
        <end position="446"/>
    </location>
</feature>
<feature type="active site" description="Nucleophile" evidence="1">
    <location>
        <position position="334"/>
    </location>
</feature>
<feature type="active site" evidence="1">
    <location>
        <position position="438"/>
    </location>
</feature>
<protein>
    <recommendedName>
        <fullName evidence="1">Cobyric acid synthase</fullName>
    </recommendedName>
</protein>
<comment type="function">
    <text evidence="1">Catalyzes amidations at positions B, D, E, and G on adenosylcobyrinic A,C-diamide. NH(2) groups are provided by glutamine, and one molecule of ATP is hydrogenolyzed for each amidation.</text>
</comment>
<comment type="pathway">
    <text evidence="1">Cofactor biosynthesis; adenosylcobalamin biosynthesis.</text>
</comment>
<comment type="similarity">
    <text evidence="1">Belongs to the CobB/CobQ family. CobQ subfamily.</text>
</comment>
<dbReference type="EMBL" id="AE006470">
    <property type="protein sequence ID" value="AAM72173.1"/>
    <property type="molecule type" value="Genomic_DNA"/>
</dbReference>
<dbReference type="RefSeq" id="NP_661831.1">
    <property type="nucleotide sequence ID" value="NC_002932.3"/>
</dbReference>
<dbReference type="RefSeq" id="WP_010932618.1">
    <property type="nucleotide sequence ID" value="NC_002932.3"/>
</dbReference>
<dbReference type="SMR" id="Q8KDV6"/>
<dbReference type="STRING" id="194439.CT0938"/>
<dbReference type="DNASU" id="1007109"/>
<dbReference type="EnsemblBacteria" id="AAM72173">
    <property type="protein sequence ID" value="AAM72173"/>
    <property type="gene ID" value="CT0938"/>
</dbReference>
<dbReference type="KEGG" id="cte:CT0938"/>
<dbReference type="PATRIC" id="fig|194439.7.peg.849"/>
<dbReference type="eggNOG" id="COG1492">
    <property type="taxonomic scope" value="Bacteria"/>
</dbReference>
<dbReference type="HOGENOM" id="CLU_019250_2_0_10"/>
<dbReference type="OrthoDB" id="9808302at2"/>
<dbReference type="UniPathway" id="UPA00148"/>
<dbReference type="Proteomes" id="UP000001007">
    <property type="component" value="Chromosome"/>
</dbReference>
<dbReference type="GO" id="GO:0015420">
    <property type="term" value="F:ABC-type vitamin B12 transporter activity"/>
    <property type="evidence" value="ECO:0007669"/>
    <property type="project" value="UniProtKB-UniRule"/>
</dbReference>
<dbReference type="GO" id="GO:0003824">
    <property type="term" value="F:catalytic activity"/>
    <property type="evidence" value="ECO:0007669"/>
    <property type="project" value="InterPro"/>
</dbReference>
<dbReference type="GO" id="GO:0009236">
    <property type="term" value="P:cobalamin biosynthetic process"/>
    <property type="evidence" value="ECO:0007669"/>
    <property type="project" value="UniProtKB-UniRule"/>
</dbReference>
<dbReference type="CDD" id="cd05389">
    <property type="entry name" value="CobQ_N"/>
    <property type="match status" value="1"/>
</dbReference>
<dbReference type="CDD" id="cd01750">
    <property type="entry name" value="GATase1_CobQ"/>
    <property type="match status" value="1"/>
</dbReference>
<dbReference type="Gene3D" id="3.40.50.880">
    <property type="match status" value="1"/>
</dbReference>
<dbReference type="Gene3D" id="3.40.50.300">
    <property type="entry name" value="P-loop containing nucleotide triphosphate hydrolases"/>
    <property type="match status" value="1"/>
</dbReference>
<dbReference type="HAMAP" id="MF_00028">
    <property type="entry name" value="CobQ"/>
    <property type="match status" value="1"/>
</dbReference>
<dbReference type="InterPro" id="IPR029062">
    <property type="entry name" value="Class_I_gatase-like"/>
</dbReference>
<dbReference type="InterPro" id="IPR002586">
    <property type="entry name" value="CobQ/CobB/MinD/ParA_Nub-bd_dom"/>
</dbReference>
<dbReference type="InterPro" id="IPR033949">
    <property type="entry name" value="CobQ_GATase1"/>
</dbReference>
<dbReference type="InterPro" id="IPR047045">
    <property type="entry name" value="CobQ_N"/>
</dbReference>
<dbReference type="InterPro" id="IPR004459">
    <property type="entry name" value="CobQ_synth"/>
</dbReference>
<dbReference type="InterPro" id="IPR011698">
    <property type="entry name" value="GATase_3"/>
</dbReference>
<dbReference type="InterPro" id="IPR027417">
    <property type="entry name" value="P-loop_NTPase"/>
</dbReference>
<dbReference type="NCBIfam" id="TIGR00313">
    <property type="entry name" value="cobQ"/>
    <property type="match status" value="1"/>
</dbReference>
<dbReference type="NCBIfam" id="NF001989">
    <property type="entry name" value="PRK00784.1"/>
    <property type="match status" value="1"/>
</dbReference>
<dbReference type="PANTHER" id="PTHR21343:SF1">
    <property type="entry name" value="COBYRIC ACID SYNTHASE"/>
    <property type="match status" value="1"/>
</dbReference>
<dbReference type="PANTHER" id="PTHR21343">
    <property type="entry name" value="DETHIOBIOTIN SYNTHETASE"/>
    <property type="match status" value="1"/>
</dbReference>
<dbReference type="Pfam" id="PF01656">
    <property type="entry name" value="CbiA"/>
    <property type="match status" value="1"/>
</dbReference>
<dbReference type="Pfam" id="PF07685">
    <property type="entry name" value="GATase_3"/>
    <property type="match status" value="1"/>
</dbReference>
<dbReference type="SUPFAM" id="SSF52317">
    <property type="entry name" value="Class I glutamine amidotransferase-like"/>
    <property type="match status" value="1"/>
</dbReference>
<dbReference type="SUPFAM" id="SSF52540">
    <property type="entry name" value="P-loop containing nucleoside triphosphate hydrolases"/>
    <property type="match status" value="1"/>
</dbReference>
<dbReference type="PROSITE" id="PS51274">
    <property type="entry name" value="GATASE_COBBQ"/>
    <property type="match status" value="1"/>
</dbReference>
<keyword id="KW-0169">Cobalamin biosynthesis</keyword>
<keyword id="KW-0315">Glutamine amidotransferase</keyword>
<keyword id="KW-1185">Reference proteome</keyword>
<gene>
    <name evidence="1" type="primary">cobQ</name>
    <name type="ordered locus">CT0938</name>
</gene>